<gene>
    <name evidence="1" type="primary">purT</name>
    <name type="ordered locus">PH0318</name>
</gene>
<dbReference type="EC" id="6.3.1.21" evidence="1"/>
<dbReference type="EMBL" id="BA000001">
    <property type="protein sequence ID" value="BAA29392.1"/>
    <property type="status" value="ALT_INIT"/>
    <property type="molecule type" value="Genomic_DNA"/>
</dbReference>
<dbReference type="PIR" id="C71138">
    <property type="entry name" value="C71138"/>
</dbReference>
<dbReference type="RefSeq" id="WP_048053086.1">
    <property type="nucleotide sequence ID" value="NC_000961.1"/>
</dbReference>
<dbReference type="PDB" id="2CZG">
    <property type="method" value="X-ray"/>
    <property type="resolution" value="2.35 A"/>
    <property type="chains" value="A/B=1-430"/>
</dbReference>
<dbReference type="PDB" id="2DWC">
    <property type="method" value="X-ray"/>
    <property type="resolution" value="1.70 A"/>
    <property type="chains" value="A/B=1-430"/>
</dbReference>
<dbReference type="PDBsum" id="2CZG"/>
<dbReference type="PDBsum" id="2DWC"/>
<dbReference type="SMR" id="O58056"/>
<dbReference type="STRING" id="70601.gene:9377237"/>
<dbReference type="EnsemblBacteria" id="BAA29392">
    <property type="protein sequence ID" value="BAA29392"/>
    <property type="gene ID" value="BAA29392"/>
</dbReference>
<dbReference type="GeneID" id="1444201"/>
<dbReference type="KEGG" id="pho:PH0318"/>
<dbReference type="eggNOG" id="arCOG01598">
    <property type="taxonomic scope" value="Archaea"/>
</dbReference>
<dbReference type="OrthoDB" id="9299at2157"/>
<dbReference type="UniPathway" id="UPA00074">
    <property type="reaction ID" value="UER00127"/>
</dbReference>
<dbReference type="EvolutionaryTrace" id="O58056"/>
<dbReference type="Proteomes" id="UP000000752">
    <property type="component" value="Chromosome"/>
</dbReference>
<dbReference type="GO" id="GO:0005829">
    <property type="term" value="C:cytosol"/>
    <property type="evidence" value="ECO:0007669"/>
    <property type="project" value="TreeGrafter"/>
</dbReference>
<dbReference type="GO" id="GO:0005524">
    <property type="term" value="F:ATP binding"/>
    <property type="evidence" value="ECO:0007669"/>
    <property type="project" value="UniProtKB-UniRule"/>
</dbReference>
<dbReference type="GO" id="GO:0000287">
    <property type="term" value="F:magnesium ion binding"/>
    <property type="evidence" value="ECO:0007669"/>
    <property type="project" value="InterPro"/>
</dbReference>
<dbReference type="GO" id="GO:0043815">
    <property type="term" value="F:phosphoribosylglycinamide formyltransferase 2 activity"/>
    <property type="evidence" value="ECO:0007669"/>
    <property type="project" value="UniProtKB-UniRule"/>
</dbReference>
<dbReference type="GO" id="GO:0004644">
    <property type="term" value="F:phosphoribosylglycinamide formyltransferase activity"/>
    <property type="evidence" value="ECO:0007669"/>
    <property type="project" value="InterPro"/>
</dbReference>
<dbReference type="GO" id="GO:0006189">
    <property type="term" value="P:'de novo' IMP biosynthetic process"/>
    <property type="evidence" value="ECO:0007669"/>
    <property type="project" value="UniProtKB-UniRule"/>
</dbReference>
<dbReference type="FunFam" id="3.30.1490.20:FF:000013">
    <property type="entry name" value="Formate-dependent phosphoribosylglycinamide formyltransferase"/>
    <property type="match status" value="1"/>
</dbReference>
<dbReference type="FunFam" id="3.30.470.20:FF:000035">
    <property type="entry name" value="Formate-dependent phosphoribosylglycinamide formyltransferase"/>
    <property type="match status" value="1"/>
</dbReference>
<dbReference type="FunFam" id="3.40.50.20:FF:000022">
    <property type="entry name" value="Formate-dependent phosphoribosylglycinamide formyltransferase"/>
    <property type="match status" value="1"/>
</dbReference>
<dbReference type="Gene3D" id="3.40.50.20">
    <property type="match status" value="1"/>
</dbReference>
<dbReference type="Gene3D" id="3.30.1490.20">
    <property type="entry name" value="ATP-grasp fold, A domain"/>
    <property type="match status" value="1"/>
</dbReference>
<dbReference type="Gene3D" id="3.30.470.20">
    <property type="entry name" value="ATP-grasp fold, B domain"/>
    <property type="match status" value="1"/>
</dbReference>
<dbReference type="HAMAP" id="MF_01643">
    <property type="entry name" value="PurT"/>
    <property type="match status" value="1"/>
</dbReference>
<dbReference type="InterPro" id="IPR011761">
    <property type="entry name" value="ATP-grasp"/>
</dbReference>
<dbReference type="InterPro" id="IPR003135">
    <property type="entry name" value="ATP-grasp_carboxylate-amine"/>
</dbReference>
<dbReference type="InterPro" id="IPR013815">
    <property type="entry name" value="ATP_grasp_subdomain_1"/>
</dbReference>
<dbReference type="InterPro" id="IPR016185">
    <property type="entry name" value="PreATP-grasp_dom_sf"/>
</dbReference>
<dbReference type="InterPro" id="IPR005862">
    <property type="entry name" value="PurT"/>
</dbReference>
<dbReference type="InterPro" id="IPR054350">
    <property type="entry name" value="PurT/PurK_preATP-grasp"/>
</dbReference>
<dbReference type="InterPro" id="IPR048740">
    <property type="entry name" value="PurT_C"/>
</dbReference>
<dbReference type="InterPro" id="IPR011054">
    <property type="entry name" value="Rudment_hybrid_motif"/>
</dbReference>
<dbReference type="NCBIfam" id="NF006766">
    <property type="entry name" value="PRK09288.1"/>
    <property type="match status" value="1"/>
</dbReference>
<dbReference type="NCBIfam" id="TIGR01142">
    <property type="entry name" value="purT"/>
    <property type="match status" value="1"/>
</dbReference>
<dbReference type="PANTHER" id="PTHR43055">
    <property type="entry name" value="FORMATE-DEPENDENT PHOSPHORIBOSYLGLYCINAMIDE FORMYLTRANSFERASE"/>
    <property type="match status" value="1"/>
</dbReference>
<dbReference type="PANTHER" id="PTHR43055:SF1">
    <property type="entry name" value="FORMATE-DEPENDENT PHOSPHORIBOSYLGLYCINAMIDE FORMYLTRANSFERASE"/>
    <property type="match status" value="1"/>
</dbReference>
<dbReference type="Pfam" id="PF02222">
    <property type="entry name" value="ATP-grasp"/>
    <property type="match status" value="1"/>
</dbReference>
<dbReference type="Pfam" id="PF21244">
    <property type="entry name" value="PurT_C"/>
    <property type="match status" value="1"/>
</dbReference>
<dbReference type="Pfam" id="PF22660">
    <property type="entry name" value="RS_preATP-grasp-like"/>
    <property type="match status" value="1"/>
</dbReference>
<dbReference type="SUPFAM" id="SSF56059">
    <property type="entry name" value="Glutathione synthetase ATP-binding domain-like"/>
    <property type="match status" value="1"/>
</dbReference>
<dbReference type="SUPFAM" id="SSF52440">
    <property type="entry name" value="PreATP-grasp domain"/>
    <property type="match status" value="1"/>
</dbReference>
<dbReference type="SUPFAM" id="SSF51246">
    <property type="entry name" value="Rudiment single hybrid motif"/>
    <property type="match status" value="1"/>
</dbReference>
<dbReference type="PROSITE" id="PS50975">
    <property type="entry name" value="ATP_GRASP"/>
    <property type="match status" value="1"/>
</dbReference>
<keyword id="KW-0002">3D-structure</keyword>
<keyword id="KW-0067">ATP-binding</keyword>
<keyword id="KW-0436">Ligase</keyword>
<keyword id="KW-0460">Magnesium</keyword>
<keyword id="KW-0479">Metal-binding</keyword>
<keyword id="KW-0547">Nucleotide-binding</keyword>
<keyword id="KW-0658">Purine biosynthesis</keyword>
<name>PURT_PYRHO</name>
<proteinExistence type="evidence at protein level"/>
<protein>
    <recommendedName>
        <fullName evidence="1">Formate-dependent phosphoribosylglycinamide formyltransferase</fullName>
        <ecNumber evidence="1">6.3.1.21</ecNumber>
    </recommendedName>
    <alternativeName>
        <fullName evidence="1">5'-phosphoribosylglycinamide transformylase 2</fullName>
    </alternativeName>
    <alternativeName>
        <fullName evidence="1">Formate-dependent GAR transformylase</fullName>
    </alternativeName>
    <alternativeName>
        <fullName evidence="1">GAR transformylase 2</fullName>
        <shortName evidence="1">GART 2</shortName>
    </alternativeName>
    <alternativeName>
        <fullName evidence="1">Non-folate glycinamide ribonucleotide transformylase</fullName>
    </alternativeName>
    <alternativeName>
        <fullName evidence="1">Phosphoribosylglycinamide formyltransferase 2</fullName>
    </alternativeName>
</protein>
<reference key="1">
    <citation type="journal article" date="1998" name="DNA Res.">
        <title>Complete sequence and gene organization of the genome of a hyper-thermophilic archaebacterium, Pyrococcus horikoshii OT3.</title>
        <authorList>
            <person name="Kawarabayasi Y."/>
            <person name="Sawada M."/>
            <person name="Horikawa H."/>
            <person name="Haikawa Y."/>
            <person name="Hino Y."/>
            <person name="Yamamoto S."/>
            <person name="Sekine M."/>
            <person name="Baba S."/>
            <person name="Kosugi H."/>
            <person name="Hosoyama A."/>
            <person name="Nagai Y."/>
            <person name="Sakai M."/>
            <person name="Ogura K."/>
            <person name="Otsuka R."/>
            <person name="Nakazawa H."/>
            <person name="Takamiya M."/>
            <person name="Ohfuku Y."/>
            <person name="Funahashi T."/>
            <person name="Tanaka T."/>
            <person name="Kudoh Y."/>
            <person name="Yamazaki J."/>
            <person name="Kushida N."/>
            <person name="Oguchi A."/>
            <person name="Aoki K."/>
            <person name="Yoshizawa T."/>
            <person name="Nakamura Y."/>
            <person name="Robb F.T."/>
            <person name="Horikoshi K."/>
            <person name="Masuchi Y."/>
            <person name="Shizuya H."/>
            <person name="Kikuchi H."/>
        </authorList>
    </citation>
    <scope>NUCLEOTIDE SEQUENCE [LARGE SCALE GENOMIC DNA]</scope>
    <source>
        <strain>ATCC 700860 / DSM 12428 / JCM 9974 / NBRC 100139 / OT-3</strain>
    </source>
</reference>
<reference key="2">
    <citation type="submission" date="2005-07" db="PDB data bank">
        <title>Crystal structure of Probable phosphoribosylglycinamide formyl transferase (PH0318) from Pyrococcus horikoshii OT3.</title>
        <authorList>
            <person name="Yoshikawa S."/>
            <person name="Arai R."/>
            <person name="Kamo-Uchikubo T."/>
            <person name="Shirouzu M."/>
            <person name="Yokoyama S."/>
        </authorList>
    </citation>
    <scope>X-RAY CRYSTALLOGRAPHY (2.35 ANGSTROMS)</scope>
    <scope>SUBUNIT</scope>
</reference>
<reference key="3">
    <citation type="submission" date="2006-08" db="PDB data bank">
        <title>Crystal structure of Probable phosphoribosylglycinamide formyl transferase from Pyrococcus horikoshii OT3 complexed with ADP.</title>
        <authorList>
            <person name="Yoshikawa S."/>
            <person name="Arai R."/>
            <person name="Kamo-Uchikubo T."/>
            <person name="Shirouzu M."/>
            <person name="Yokoyama S."/>
        </authorList>
    </citation>
    <scope>X-RAY CRYSTALLOGRAPHY (1.70 ANGSTROMS) IN COMPLEX WITH ADP</scope>
    <scope>SUBUNIT</scope>
</reference>
<sequence length="430" mass="48374">MIKLRDELGTATTDSAQKILLLGSGELGKEIAIEAQRLGVEVVAVDRYANAPAMQVAHRSYVGNMMDKDFLWSVVEREKPDAIIPEIEAINLDALFEFEKDGYFVVPNARATWIAMHRERLRETLVKEAKVPTSRYMYATTLDELYEACEKIGYPCHTKAIMSSSGKGSYFVKGPEDIPKAWEEAKTKARGSAEKIIVEEHIDFDVEVTELAVRHFDENGEIVTTFPKPVGHYQIDGDYHASWQPAEISEKAEREVYRIAKRITDVLGGLGIFGVEMFVKGDKVWANEVSPRPHDTGMVTLASHPPGFSEFALHLRAVLGLPIPGEWVDGYRLFPMLIPAATHVIKAKVSGYSPRFRGLVKALSVPNATVRLFGKPEAYVGRRLGIALAWDKDVEVAKRKAEMVAHMIELRTRSSDWHDQNYEKRKHLLR</sequence>
<organism>
    <name type="scientific">Pyrococcus horikoshii (strain ATCC 700860 / DSM 12428 / JCM 9974 / NBRC 100139 / OT-3)</name>
    <dbReference type="NCBI Taxonomy" id="70601"/>
    <lineage>
        <taxon>Archaea</taxon>
        <taxon>Methanobacteriati</taxon>
        <taxon>Methanobacteriota</taxon>
        <taxon>Thermococci</taxon>
        <taxon>Thermococcales</taxon>
        <taxon>Thermococcaceae</taxon>
        <taxon>Pyrococcus</taxon>
    </lineage>
</organism>
<evidence type="ECO:0000255" key="1">
    <source>
        <dbReference type="HAMAP-Rule" id="MF_01643"/>
    </source>
</evidence>
<evidence type="ECO:0000269" key="2">
    <source ref="3"/>
</evidence>
<evidence type="ECO:0000305" key="3"/>
<evidence type="ECO:0000305" key="4">
    <source ref="2"/>
</evidence>
<evidence type="ECO:0000305" key="5">
    <source ref="3"/>
</evidence>
<evidence type="ECO:0007829" key="6">
    <source>
        <dbReference type="PDB" id="2DWC"/>
    </source>
</evidence>
<comment type="function">
    <text evidence="1">Involved in the de novo purine biosynthesis. Catalyzes the transfer of formate to 5-phospho-ribosyl-glycinamide (GAR), producing 5-phospho-ribosyl-N-formylglycinamide (FGAR). Formate is provided by PurU via hydrolysis of 10-formyl-tetrahydrofolate.</text>
</comment>
<comment type="catalytic activity">
    <reaction evidence="1">
        <text>N(1)-(5-phospho-beta-D-ribosyl)glycinamide + formate + ATP = N(2)-formyl-N(1)-(5-phospho-beta-D-ribosyl)glycinamide + ADP + phosphate + H(+)</text>
        <dbReference type="Rhea" id="RHEA:24829"/>
        <dbReference type="ChEBI" id="CHEBI:15378"/>
        <dbReference type="ChEBI" id="CHEBI:15740"/>
        <dbReference type="ChEBI" id="CHEBI:30616"/>
        <dbReference type="ChEBI" id="CHEBI:43474"/>
        <dbReference type="ChEBI" id="CHEBI:143788"/>
        <dbReference type="ChEBI" id="CHEBI:147286"/>
        <dbReference type="ChEBI" id="CHEBI:456216"/>
        <dbReference type="EC" id="6.3.1.21"/>
    </reaction>
    <physiologicalReaction direction="left-to-right" evidence="1">
        <dbReference type="Rhea" id="RHEA:24830"/>
    </physiologicalReaction>
</comment>
<comment type="pathway">
    <text evidence="1">Purine metabolism; IMP biosynthesis via de novo pathway; N(2)-formyl-N(1)-(5-phospho-D-ribosyl)glycinamide from N(1)-(5-phospho-D-ribosyl)glycinamide (formate route): step 1/1.</text>
</comment>
<comment type="subunit">
    <text evidence="1 4 5">Homodimer.</text>
</comment>
<comment type="similarity">
    <text evidence="1">Belongs to the PurK/PurT family.</text>
</comment>
<comment type="sequence caution" evidence="3">
    <conflict type="erroneous initiation">
        <sequence resource="EMBL-CDS" id="BAA29392"/>
    </conflict>
</comment>
<accession>O58056</accession>
<feature type="chain" id="PRO_0000319285" description="Formate-dependent phosphoribosylglycinamide formyltransferase">
    <location>
        <begin position="1"/>
        <end position="430"/>
    </location>
</feature>
<feature type="domain" description="ATP-grasp" evidence="1">
    <location>
        <begin position="123"/>
        <end position="319"/>
    </location>
</feature>
<feature type="binding site" evidence="1">
    <location>
        <begin position="26"/>
        <end position="27"/>
    </location>
    <ligand>
        <name>N(1)-(5-phospho-beta-D-ribosyl)glycinamide</name>
        <dbReference type="ChEBI" id="CHEBI:143788"/>
    </ligand>
</feature>
<feature type="binding site" evidence="1">
    <location>
        <position position="86"/>
    </location>
    <ligand>
        <name>N(1)-(5-phospho-beta-D-ribosyl)glycinamide</name>
        <dbReference type="ChEBI" id="CHEBI:143788"/>
    </ligand>
</feature>
<feature type="binding site" evidence="1 2">
    <location>
        <position position="118"/>
    </location>
    <ligand>
        <name>ATP</name>
        <dbReference type="ChEBI" id="CHEBI:30616"/>
    </ligand>
</feature>
<feature type="binding site" evidence="1 2">
    <location>
        <position position="159"/>
    </location>
    <ligand>
        <name>ATP</name>
        <dbReference type="ChEBI" id="CHEBI:30616"/>
    </ligand>
</feature>
<feature type="binding site" evidence="1 2">
    <location>
        <begin position="199"/>
        <end position="202"/>
    </location>
    <ligand>
        <name>ATP</name>
        <dbReference type="ChEBI" id="CHEBI:30616"/>
    </ligand>
</feature>
<feature type="binding site" evidence="1 2">
    <location>
        <position position="207"/>
    </location>
    <ligand>
        <name>ATP</name>
        <dbReference type="ChEBI" id="CHEBI:30616"/>
    </ligand>
</feature>
<feature type="binding site" evidence="1">
    <location>
        <position position="276"/>
    </location>
    <ligand>
        <name>Mg(2+)</name>
        <dbReference type="ChEBI" id="CHEBI:18420"/>
    </ligand>
</feature>
<feature type="binding site" evidence="1">
    <location>
        <position position="288"/>
    </location>
    <ligand>
        <name>Mg(2+)</name>
        <dbReference type="ChEBI" id="CHEBI:18420"/>
    </ligand>
</feature>
<feature type="binding site" evidence="1">
    <location>
        <position position="295"/>
    </location>
    <ligand>
        <name>N(1)-(5-phospho-beta-D-ribosyl)glycinamide</name>
        <dbReference type="ChEBI" id="CHEBI:143788"/>
    </ligand>
</feature>
<feature type="binding site" evidence="1">
    <location>
        <position position="375"/>
    </location>
    <ligand>
        <name>N(1)-(5-phospho-beta-D-ribosyl)glycinamide</name>
        <dbReference type="ChEBI" id="CHEBI:143788"/>
    </ligand>
</feature>
<feature type="binding site" evidence="1">
    <location>
        <begin position="382"/>
        <end position="383"/>
    </location>
    <ligand>
        <name>N(1)-(5-phospho-beta-D-ribosyl)glycinamide</name>
        <dbReference type="ChEBI" id="CHEBI:143788"/>
    </ligand>
</feature>
<feature type="strand" evidence="6">
    <location>
        <begin position="18"/>
        <end position="23"/>
    </location>
</feature>
<feature type="helix" evidence="6">
    <location>
        <begin position="26"/>
        <end position="37"/>
    </location>
</feature>
<feature type="strand" evidence="6">
    <location>
        <begin position="41"/>
        <end position="48"/>
    </location>
</feature>
<feature type="helix" evidence="6">
    <location>
        <begin position="52"/>
        <end position="56"/>
    </location>
</feature>
<feature type="strand" evidence="6">
    <location>
        <begin position="57"/>
        <end position="63"/>
    </location>
</feature>
<feature type="helix" evidence="6">
    <location>
        <begin position="68"/>
        <end position="78"/>
    </location>
</feature>
<feature type="strand" evidence="6">
    <location>
        <begin position="81"/>
        <end position="85"/>
    </location>
</feature>
<feature type="helix" evidence="6">
    <location>
        <begin position="92"/>
        <end position="100"/>
    </location>
</feature>
<feature type="strand" evidence="6">
    <location>
        <begin position="105"/>
        <end position="107"/>
    </location>
</feature>
<feature type="helix" evidence="6">
    <location>
        <begin position="109"/>
        <end position="116"/>
    </location>
</feature>
<feature type="helix" evidence="6">
    <location>
        <begin position="118"/>
        <end position="127"/>
    </location>
</feature>
<feature type="strand" evidence="6">
    <location>
        <begin position="136"/>
        <end position="141"/>
    </location>
</feature>
<feature type="helix" evidence="6">
    <location>
        <begin position="142"/>
        <end position="152"/>
    </location>
</feature>
<feature type="strand" evidence="6">
    <location>
        <begin position="154"/>
        <end position="160"/>
    </location>
</feature>
<feature type="strand" evidence="6">
    <location>
        <begin position="170"/>
        <end position="172"/>
    </location>
</feature>
<feature type="helix" evidence="6">
    <location>
        <begin position="175"/>
        <end position="177"/>
    </location>
</feature>
<feature type="helix" evidence="6">
    <location>
        <begin position="178"/>
        <end position="183"/>
    </location>
</feature>
<feature type="strand" evidence="6">
    <location>
        <begin position="196"/>
        <end position="200"/>
    </location>
</feature>
<feature type="strand" evidence="6">
    <location>
        <begin position="205"/>
        <end position="210"/>
    </location>
</feature>
<feature type="strand" evidence="6">
    <location>
        <begin position="213"/>
        <end position="216"/>
    </location>
</feature>
<feature type="strand" evidence="6">
    <location>
        <begin position="222"/>
        <end position="227"/>
    </location>
</feature>
<feature type="strand" evidence="6">
    <location>
        <begin position="230"/>
        <end position="245"/>
    </location>
</feature>
<feature type="helix" evidence="6">
    <location>
        <begin position="250"/>
        <end position="267"/>
    </location>
</feature>
<feature type="strand" evidence="6">
    <location>
        <begin position="269"/>
        <end position="272"/>
    </location>
</feature>
<feature type="strand" evidence="6">
    <location>
        <begin position="274"/>
        <end position="280"/>
    </location>
</feature>
<feature type="strand" evidence="6">
    <location>
        <begin position="283"/>
        <end position="292"/>
    </location>
</feature>
<feature type="helix" evidence="6">
    <location>
        <begin position="295"/>
        <end position="299"/>
    </location>
</feature>
<feature type="helix" evidence="6">
    <location>
        <begin position="300"/>
        <end position="303"/>
    </location>
</feature>
<feature type="helix" evidence="6">
    <location>
        <begin position="310"/>
        <end position="319"/>
    </location>
</feature>
<feature type="strand" evidence="6">
    <location>
        <begin position="326"/>
        <end position="328"/>
    </location>
</feature>
<feature type="strand" evidence="6">
    <location>
        <begin position="331"/>
        <end position="334"/>
    </location>
</feature>
<feature type="strand" evidence="6">
    <location>
        <begin position="340"/>
        <end position="346"/>
    </location>
</feature>
<feature type="strand" evidence="6">
    <location>
        <begin position="351"/>
        <end position="353"/>
    </location>
</feature>
<feature type="strand" evidence="6">
    <location>
        <begin position="355"/>
        <end position="357"/>
    </location>
</feature>
<feature type="helix" evidence="6">
    <location>
        <begin position="359"/>
        <end position="362"/>
    </location>
</feature>
<feature type="strand" evidence="6">
    <location>
        <begin position="368"/>
        <end position="372"/>
    </location>
</feature>
<feature type="strand" evidence="6">
    <location>
        <begin position="376"/>
        <end position="378"/>
    </location>
</feature>
<feature type="strand" evidence="6">
    <location>
        <begin position="383"/>
        <end position="390"/>
    </location>
</feature>
<feature type="helix" evidence="6">
    <location>
        <begin position="394"/>
        <end position="406"/>
    </location>
</feature>
<feature type="strand" evidence="6">
    <location>
        <begin position="409"/>
        <end position="411"/>
    </location>
</feature>